<name>RS14_PARMW</name>
<proteinExistence type="inferred from homology"/>
<evidence type="ECO:0000255" key="1">
    <source>
        <dbReference type="HAMAP-Rule" id="MF_00537"/>
    </source>
</evidence>
<evidence type="ECO:0000305" key="2"/>
<organism>
    <name type="scientific">Parasynechococcus marenigrum (strain WH8102)</name>
    <dbReference type="NCBI Taxonomy" id="84588"/>
    <lineage>
        <taxon>Bacteria</taxon>
        <taxon>Bacillati</taxon>
        <taxon>Cyanobacteriota</taxon>
        <taxon>Cyanophyceae</taxon>
        <taxon>Synechococcales</taxon>
        <taxon>Prochlorococcaceae</taxon>
        <taxon>Parasynechococcus</taxon>
        <taxon>Parasynechococcus marenigrum</taxon>
    </lineage>
</organism>
<protein>
    <recommendedName>
        <fullName evidence="1">Small ribosomal subunit protein uS14</fullName>
    </recommendedName>
    <alternativeName>
        <fullName evidence="2">30S ribosomal protein S14</fullName>
    </alternativeName>
</protein>
<gene>
    <name evidence="1" type="primary">rpsN</name>
    <name evidence="1" type="synonym">rps14</name>
    <name type="ordered locus">SYNW1896</name>
</gene>
<reference key="1">
    <citation type="journal article" date="2003" name="Nature">
        <title>The genome of a motile marine Synechococcus.</title>
        <authorList>
            <person name="Palenik B."/>
            <person name="Brahamsha B."/>
            <person name="Larimer F.W."/>
            <person name="Land M.L."/>
            <person name="Hauser L."/>
            <person name="Chain P."/>
            <person name="Lamerdin J.E."/>
            <person name="Regala W."/>
            <person name="Allen E.E."/>
            <person name="McCarren J."/>
            <person name="Paulsen I.T."/>
            <person name="Dufresne A."/>
            <person name="Partensky F."/>
            <person name="Webb E.A."/>
            <person name="Waterbury J."/>
        </authorList>
    </citation>
    <scope>NUCLEOTIDE SEQUENCE [LARGE SCALE GENOMIC DNA]</scope>
    <source>
        <strain>WH8102</strain>
    </source>
</reference>
<comment type="function">
    <text evidence="1">Binds 16S rRNA, required for the assembly of 30S particles and may also be responsible for determining the conformation of the 16S rRNA at the A site.</text>
</comment>
<comment type="subunit">
    <text evidence="1">Part of the 30S ribosomal subunit. Contacts proteins S3 and S10.</text>
</comment>
<comment type="similarity">
    <text evidence="1">Belongs to the universal ribosomal protein uS14 family.</text>
</comment>
<keyword id="KW-0687">Ribonucleoprotein</keyword>
<keyword id="KW-0689">Ribosomal protein</keyword>
<keyword id="KW-0694">RNA-binding</keyword>
<keyword id="KW-0699">rRNA-binding</keyword>
<accession>Q7U516</accession>
<dbReference type="EMBL" id="BX569694">
    <property type="protein sequence ID" value="CAE08411.1"/>
    <property type="molecule type" value="Genomic_DNA"/>
</dbReference>
<dbReference type="RefSeq" id="WP_011128754.1">
    <property type="nucleotide sequence ID" value="NC_005070.1"/>
</dbReference>
<dbReference type="SMR" id="Q7U516"/>
<dbReference type="STRING" id="84588.SYNW1896"/>
<dbReference type="KEGG" id="syw:SYNW1896"/>
<dbReference type="eggNOG" id="COG0199">
    <property type="taxonomic scope" value="Bacteria"/>
</dbReference>
<dbReference type="HOGENOM" id="CLU_139869_0_1_3"/>
<dbReference type="Proteomes" id="UP000001422">
    <property type="component" value="Chromosome"/>
</dbReference>
<dbReference type="GO" id="GO:0005737">
    <property type="term" value="C:cytoplasm"/>
    <property type="evidence" value="ECO:0007669"/>
    <property type="project" value="UniProtKB-ARBA"/>
</dbReference>
<dbReference type="GO" id="GO:0015935">
    <property type="term" value="C:small ribosomal subunit"/>
    <property type="evidence" value="ECO:0007669"/>
    <property type="project" value="TreeGrafter"/>
</dbReference>
<dbReference type="GO" id="GO:0019843">
    <property type="term" value="F:rRNA binding"/>
    <property type="evidence" value="ECO:0007669"/>
    <property type="project" value="UniProtKB-UniRule"/>
</dbReference>
<dbReference type="GO" id="GO:0003735">
    <property type="term" value="F:structural constituent of ribosome"/>
    <property type="evidence" value="ECO:0007669"/>
    <property type="project" value="InterPro"/>
</dbReference>
<dbReference type="GO" id="GO:0006412">
    <property type="term" value="P:translation"/>
    <property type="evidence" value="ECO:0007669"/>
    <property type="project" value="UniProtKB-UniRule"/>
</dbReference>
<dbReference type="FunFam" id="1.10.287.1480:FF:000001">
    <property type="entry name" value="30S ribosomal protein S14"/>
    <property type="match status" value="1"/>
</dbReference>
<dbReference type="Gene3D" id="1.10.287.1480">
    <property type="match status" value="1"/>
</dbReference>
<dbReference type="HAMAP" id="MF_00537">
    <property type="entry name" value="Ribosomal_uS14_1"/>
    <property type="match status" value="1"/>
</dbReference>
<dbReference type="InterPro" id="IPR001209">
    <property type="entry name" value="Ribosomal_uS14"/>
</dbReference>
<dbReference type="InterPro" id="IPR023036">
    <property type="entry name" value="Ribosomal_uS14_bac/plastid"/>
</dbReference>
<dbReference type="InterPro" id="IPR018271">
    <property type="entry name" value="Ribosomal_uS14_CS"/>
</dbReference>
<dbReference type="NCBIfam" id="NF006477">
    <property type="entry name" value="PRK08881.1"/>
    <property type="match status" value="1"/>
</dbReference>
<dbReference type="PANTHER" id="PTHR19836">
    <property type="entry name" value="30S RIBOSOMAL PROTEIN S14"/>
    <property type="match status" value="1"/>
</dbReference>
<dbReference type="PANTHER" id="PTHR19836:SF19">
    <property type="entry name" value="SMALL RIBOSOMAL SUBUNIT PROTEIN US14M"/>
    <property type="match status" value="1"/>
</dbReference>
<dbReference type="Pfam" id="PF00253">
    <property type="entry name" value="Ribosomal_S14"/>
    <property type="match status" value="1"/>
</dbReference>
<dbReference type="SUPFAM" id="SSF57716">
    <property type="entry name" value="Glucocorticoid receptor-like (DNA-binding domain)"/>
    <property type="match status" value="1"/>
</dbReference>
<dbReference type="PROSITE" id="PS00527">
    <property type="entry name" value="RIBOSOMAL_S14"/>
    <property type="match status" value="1"/>
</dbReference>
<sequence>MAKKSMIARDVKRKKMAERYAAKRAALMAAFNAADDPMDRLEIHRKIQALPRNSAPSRIRNRCWATGKPRGYYRDFGLCRNQLRERAHKGELPGVVKSSW</sequence>
<feature type="chain" id="PRO_1000128615" description="Small ribosomal subunit protein uS14">
    <location>
        <begin position="1"/>
        <end position="100"/>
    </location>
</feature>